<sequence length="421" mass="45195">MIHDTSARSRTAVFSAWRGRCSRLTRDRWRVALLILLSIAVGAVGWSGEALLLPTAMLFPLLWAQSPSRLVAGAVSAGYFLTASRGLPQGVANFYAADFWHGLLLWLAASAGFVAVHAAFWPARLQKRLPGRGALGWGKPVRYLAAAVLMGLPPFGITGWAHPLTAAGILFPGFGWWGLGATTAGLAMMTSRYWPAAAIALGGFWFWSAATWTQPVLPDGWKGVDLEQGQTLGRDGSLDHHRDLIATVRAAAGAETRVIVLPESALGLWTPTVARLWQAGLRGADVTVIAGAAVIDPGGYDNVMVTVSEGETRILYRERMPIPVSMWQPWLQWTGQGGGAQAHFFANPAVDLAGTRIAPLICYEQLIVWPILHSMLFSPAAIVATGNGWWTEGTSIVAIQQAGVIAWAKLFGRPVVTAFNT</sequence>
<gene>
    <name type="primary">traB</name>
    <name type="ordered locus">Atu6129</name>
    <name type="ORF">AGR_pTi_241</name>
</gene>
<protein>
    <recommendedName>
        <fullName>Conjugal transfer protein TraB</fullName>
    </recommendedName>
</protein>
<organism>
    <name type="scientific">Agrobacterium fabrum (strain C58 / ATCC 33970)</name>
    <name type="common">Agrobacterium tumefaciens (strain C58)</name>
    <dbReference type="NCBI Taxonomy" id="176299"/>
    <lineage>
        <taxon>Bacteria</taxon>
        <taxon>Pseudomonadati</taxon>
        <taxon>Pseudomonadota</taxon>
        <taxon>Alphaproteobacteria</taxon>
        <taxon>Hyphomicrobiales</taxon>
        <taxon>Rhizobiaceae</taxon>
        <taxon>Rhizobium/Agrobacterium group</taxon>
        <taxon>Agrobacterium</taxon>
        <taxon>Agrobacterium tumefaciens complex</taxon>
    </lineage>
</organism>
<comment type="function">
    <text>Enhances conjugal transfer of the Ti plasmid.</text>
</comment>
<comment type="subcellular location">
    <subcellularLocation>
        <location evidence="3">Cell membrane</location>
        <topology evidence="3">Multi-pass membrane protein</topology>
    </subcellularLocation>
</comment>
<comment type="sequence caution" evidence="3">
    <conflict type="erroneous initiation">
        <sequence resource="EMBL-CDS" id="AAK91093"/>
    </conflict>
</comment>
<proteinExistence type="predicted"/>
<feature type="chain" id="PRO_0000065596" description="Conjugal transfer protein TraB">
    <location>
        <begin position="1"/>
        <end position="421"/>
    </location>
</feature>
<feature type="transmembrane region" description="Helical" evidence="1">
    <location>
        <begin position="33"/>
        <end position="53"/>
    </location>
</feature>
<feature type="transmembrane region" description="Helical" evidence="1">
    <location>
        <begin position="103"/>
        <end position="123"/>
    </location>
</feature>
<feature type="transmembrane region" description="Helical" evidence="1">
    <location>
        <begin position="144"/>
        <end position="164"/>
    </location>
</feature>
<feature type="transmembrane region" description="Helical" evidence="1">
    <location>
        <begin position="169"/>
        <end position="189"/>
    </location>
</feature>
<feature type="transmembrane region" description="Helical" evidence="1">
    <location>
        <begin position="193"/>
        <end position="213"/>
    </location>
</feature>
<feature type="transmembrane region" description="Helical" evidence="1">
    <location>
        <begin position="287"/>
        <end position="307"/>
    </location>
</feature>
<feature type="transmembrane region" description="Helical" evidence="1">
    <location>
        <begin position="366"/>
        <end position="386"/>
    </location>
</feature>
<feature type="transmembrane region" description="Helical" evidence="1">
    <location>
        <begin position="388"/>
        <end position="408"/>
    </location>
</feature>
<feature type="domain" description="CN hydrolase" evidence="2">
    <location>
        <begin position="222"/>
        <end position="421"/>
    </location>
</feature>
<geneLocation type="plasmid">
    <name>pTiC58</name>
</geneLocation>
<dbReference type="EMBL" id="AF010180">
    <property type="protein sequence ID" value="AAC17208.1"/>
    <property type="molecule type" value="Genomic_DNA"/>
</dbReference>
<dbReference type="EMBL" id="AE007871">
    <property type="protein sequence ID" value="AAK91093.2"/>
    <property type="status" value="ALT_INIT"/>
    <property type="molecule type" value="Genomic_DNA"/>
</dbReference>
<dbReference type="PIR" id="AG3243">
    <property type="entry name" value="AG3243"/>
</dbReference>
<dbReference type="PIR" id="T03421">
    <property type="entry name" value="T03421"/>
</dbReference>
<dbReference type="RefSeq" id="NP_396652.4">
    <property type="nucleotide sequence ID" value="NC_003065.3"/>
</dbReference>
<dbReference type="EnsemblBacteria" id="AAK91093">
    <property type="protein sequence ID" value="AAK91093"/>
    <property type="gene ID" value="Atu6129"/>
</dbReference>
<dbReference type="KEGG" id="atu:Atu6129"/>
<dbReference type="PATRIC" id="fig|176299.10.peg.5336"/>
<dbReference type="HOGENOM" id="CLU_042375_0_0_5"/>
<dbReference type="OrthoDB" id="8206526at2"/>
<dbReference type="Proteomes" id="UP000000813">
    <property type="component" value="Plasmid Ti"/>
</dbReference>
<dbReference type="GO" id="GO:0005886">
    <property type="term" value="C:plasma membrane"/>
    <property type="evidence" value="ECO:0007669"/>
    <property type="project" value="UniProtKB-SubCell"/>
</dbReference>
<dbReference type="Gene3D" id="3.60.110.10">
    <property type="entry name" value="Carbon-nitrogen hydrolase"/>
    <property type="match status" value="1"/>
</dbReference>
<dbReference type="InterPro" id="IPR003010">
    <property type="entry name" value="C-N_Hydrolase"/>
</dbReference>
<dbReference type="InterPro" id="IPR036526">
    <property type="entry name" value="C-N_Hydrolase_sf"/>
</dbReference>
<dbReference type="InterPro" id="IPR016707">
    <property type="entry name" value="Conjugal_tfr_TraB_rhizob"/>
</dbReference>
<dbReference type="NCBIfam" id="NF010398">
    <property type="entry name" value="PRK13825.1-2"/>
    <property type="match status" value="1"/>
</dbReference>
<dbReference type="Pfam" id="PF00795">
    <property type="entry name" value="CN_hydrolase"/>
    <property type="match status" value="1"/>
</dbReference>
<dbReference type="PIRSF" id="PIRSF017932">
    <property type="entry name" value="Conjugal_transfer_TraB_rhizob"/>
    <property type="match status" value="1"/>
</dbReference>
<dbReference type="SUPFAM" id="SSF56317">
    <property type="entry name" value="Carbon-nitrogen hydrolase"/>
    <property type="match status" value="1"/>
</dbReference>
<dbReference type="PROSITE" id="PS50263">
    <property type="entry name" value="CN_HYDROLASE"/>
    <property type="match status" value="1"/>
</dbReference>
<accession>Q44351</accession>
<keyword id="KW-1003">Cell membrane</keyword>
<keyword id="KW-0184">Conjugation</keyword>
<keyword id="KW-0472">Membrane</keyword>
<keyword id="KW-0614">Plasmid</keyword>
<keyword id="KW-1185">Reference proteome</keyword>
<keyword id="KW-0812">Transmembrane</keyword>
<keyword id="KW-1133">Transmembrane helix</keyword>
<reference key="1">
    <citation type="journal article" date="1996" name="J. Bacteriol.">
        <title>The tra region of the nopaline-type Ti plasmid is a chimera with elements related to the transfer systems of RSF1010, RP4, and F.</title>
        <authorList>
            <person name="Farrand S.K."/>
            <person name="Hwang I."/>
            <person name="Cook D.M."/>
        </authorList>
    </citation>
    <scope>NUCLEOTIDE SEQUENCE [GENOMIC DNA]</scope>
</reference>
<reference key="2">
    <citation type="journal article" date="2001" name="Science">
        <title>The genome of the natural genetic engineer Agrobacterium tumefaciens C58.</title>
        <authorList>
            <person name="Wood D.W."/>
            <person name="Setubal J.C."/>
            <person name="Kaul R."/>
            <person name="Monks D.E."/>
            <person name="Kitajima J.P."/>
            <person name="Okura V.K."/>
            <person name="Zhou Y."/>
            <person name="Chen L."/>
            <person name="Wood G.E."/>
            <person name="Almeida N.F. Jr."/>
            <person name="Woo L."/>
            <person name="Chen Y."/>
            <person name="Paulsen I.T."/>
            <person name="Eisen J.A."/>
            <person name="Karp P.D."/>
            <person name="Bovee D. Sr."/>
            <person name="Chapman P."/>
            <person name="Clendenning J."/>
            <person name="Deatherage G."/>
            <person name="Gillet W."/>
            <person name="Grant C."/>
            <person name="Kutyavin T."/>
            <person name="Levy R."/>
            <person name="Li M.-J."/>
            <person name="McClelland E."/>
            <person name="Palmieri A."/>
            <person name="Raymond C."/>
            <person name="Rouse G."/>
            <person name="Saenphimmachak C."/>
            <person name="Wu Z."/>
            <person name="Romero P."/>
            <person name="Gordon D."/>
            <person name="Zhang S."/>
            <person name="Yoo H."/>
            <person name="Tao Y."/>
            <person name="Biddle P."/>
            <person name="Jung M."/>
            <person name="Krespan W."/>
            <person name="Perry M."/>
            <person name="Gordon-Kamm B."/>
            <person name="Liao L."/>
            <person name="Kim S."/>
            <person name="Hendrick C."/>
            <person name="Zhao Z.-Y."/>
            <person name="Dolan M."/>
            <person name="Chumley F."/>
            <person name="Tingey S.V."/>
            <person name="Tomb J.-F."/>
            <person name="Gordon M.P."/>
            <person name="Olson M.V."/>
            <person name="Nester E.W."/>
        </authorList>
    </citation>
    <scope>NUCLEOTIDE SEQUENCE [LARGE SCALE GENOMIC DNA]</scope>
</reference>
<reference key="3">
    <citation type="journal article" date="2001" name="Science">
        <title>Genome sequence of the plant pathogen and biotechnology agent Agrobacterium tumefaciens C58.</title>
        <authorList>
            <person name="Goodner B."/>
            <person name="Hinkle G."/>
            <person name="Gattung S."/>
            <person name="Miller N."/>
            <person name="Blanchard M."/>
            <person name="Qurollo B."/>
            <person name="Goldman B.S."/>
            <person name="Cao Y."/>
            <person name="Askenazi M."/>
            <person name="Halling C."/>
            <person name="Mullin L."/>
            <person name="Houmiel K."/>
            <person name="Gordon J."/>
            <person name="Vaudin M."/>
            <person name="Iartchouk O."/>
            <person name="Epp A."/>
            <person name="Liu F."/>
            <person name="Wollam C."/>
            <person name="Allinger M."/>
            <person name="Doughty D."/>
            <person name="Scott C."/>
            <person name="Lappas C."/>
            <person name="Markelz B."/>
            <person name="Flanagan C."/>
            <person name="Crowell C."/>
            <person name="Gurson J."/>
            <person name="Lomo C."/>
            <person name="Sear C."/>
            <person name="Strub G."/>
            <person name="Cielo C."/>
            <person name="Slater S."/>
        </authorList>
    </citation>
    <scope>NUCLEOTIDE SEQUENCE [LARGE SCALE GENOMIC DNA]</scope>
    <source>
        <strain>C58 / ATCC 33970</strain>
    </source>
</reference>
<name>TRAB_AGRFC</name>
<evidence type="ECO:0000255" key="1"/>
<evidence type="ECO:0000255" key="2">
    <source>
        <dbReference type="PROSITE-ProRule" id="PRU00054"/>
    </source>
</evidence>
<evidence type="ECO:0000305" key="3"/>